<protein>
    <recommendedName>
        <fullName evidence="1">3-ketoacyl-CoA thiolase</fullName>
        <ecNumber evidence="1">2.3.1.16</ecNumber>
    </recommendedName>
    <alternativeName>
        <fullName evidence="1">Acetyl-CoA acyltransferase</fullName>
    </alternativeName>
    <alternativeName>
        <fullName evidence="1">Beta-ketothiolase</fullName>
    </alternativeName>
    <alternativeName>
        <fullName evidence="1">Fatty acid oxidation complex subunit beta</fullName>
    </alternativeName>
</protein>
<feature type="chain" id="PRO_0000206401" description="3-ketoacyl-CoA thiolase">
    <location>
        <begin position="1"/>
        <end position="387"/>
    </location>
</feature>
<feature type="active site" description="Acyl-thioester intermediate" evidence="1">
    <location>
        <position position="91"/>
    </location>
</feature>
<feature type="active site" description="Proton acceptor" evidence="1">
    <location>
        <position position="343"/>
    </location>
</feature>
<feature type="active site" description="Proton acceptor" evidence="1">
    <location>
        <position position="373"/>
    </location>
</feature>
<sequence>MENVVIIDAVRTPMGRSKGGAFRHVRAEDLSAHLMRAVISRNPGLNAAEIDDIYWGCVQQTLEQGFNIARNASLLAEIPHSVPAVTVNRLCGSSMQALHDGARAIMVGDAKISLIGGVEHMGHVPMNHGVDFHPGMGRTVAKAAGMMGLTAEMLAKIHNISRQSQDEFAFRSHQRAYAATQAGHFAKEIVATNGHDAEGVLKRFDFDEVIRPETNLSGLAALRPAFDPVNGTVTAGTSSALSDGASAMLIMSESRAKSLGLTPRARIRSMAVVGCDPSIMGYGPVPASQLALKRAGLELADIGLFELNEAFAAQSLACLKGLGLLESMDDKVNLNGGAIALGHPLGCSGARISTTLLNLMERRDVQFGLATMCIGLGQGIATVFERL</sequence>
<evidence type="ECO:0000255" key="1">
    <source>
        <dbReference type="HAMAP-Rule" id="MF_01620"/>
    </source>
</evidence>
<name>FADA_YERPS</name>
<comment type="function">
    <text evidence="1">Catalyzes the final step of fatty acid oxidation in which acetyl-CoA is released and the CoA ester of a fatty acid two carbons shorter is formed.</text>
</comment>
<comment type="catalytic activity">
    <reaction evidence="1">
        <text>an acyl-CoA + acetyl-CoA = a 3-oxoacyl-CoA + CoA</text>
        <dbReference type="Rhea" id="RHEA:21564"/>
        <dbReference type="ChEBI" id="CHEBI:57287"/>
        <dbReference type="ChEBI" id="CHEBI:57288"/>
        <dbReference type="ChEBI" id="CHEBI:58342"/>
        <dbReference type="ChEBI" id="CHEBI:90726"/>
        <dbReference type="EC" id="2.3.1.16"/>
    </reaction>
</comment>
<comment type="pathway">
    <text evidence="1">Lipid metabolism; fatty acid beta-oxidation.</text>
</comment>
<comment type="subunit">
    <text evidence="1">Heterotetramer of two alpha chains (FadB) and two beta chains (FadA).</text>
</comment>
<comment type="subcellular location">
    <subcellularLocation>
        <location evidence="1">Cytoplasm</location>
    </subcellularLocation>
</comment>
<comment type="similarity">
    <text evidence="1">Belongs to the thiolase-like superfamily. Thiolase family.</text>
</comment>
<keyword id="KW-0012">Acyltransferase</keyword>
<keyword id="KW-0963">Cytoplasm</keyword>
<keyword id="KW-0276">Fatty acid metabolism</keyword>
<keyword id="KW-0442">Lipid degradation</keyword>
<keyword id="KW-0443">Lipid metabolism</keyword>
<keyword id="KW-0808">Transferase</keyword>
<gene>
    <name evidence="1" type="primary">fadA</name>
    <name type="ordered locus">YPTB0266</name>
</gene>
<dbReference type="EC" id="2.3.1.16" evidence="1"/>
<dbReference type="EMBL" id="BX936398">
    <property type="protein sequence ID" value="CAH19506.1"/>
    <property type="molecule type" value="Genomic_DNA"/>
</dbReference>
<dbReference type="RefSeq" id="WP_002211545.1">
    <property type="nucleotide sequence ID" value="NZ_CP009712.1"/>
</dbReference>
<dbReference type="SMR" id="Q66FR9"/>
<dbReference type="GeneID" id="57974941"/>
<dbReference type="KEGG" id="ypo:BZ17_2317"/>
<dbReference type="KEGG" id="yps:YPTB0266"/>
<dbReference type="PATRIC" id="fig|273123.14.peg.2440"/>
<dbReference type="UniPathway" id="UPA00659"/>
<dbReference type="Proteomes" id="UP000001011">
    <property type="component" value="Chromosome"/>
</dbReference>
<dbReference type="GO" id="GO:0005737">
    <property type="term" value="C:cytoplasm"/>
    <property type="evidence" value="ECO:0007669"/>
    <property type="project" value="UniProtKB-SubCell"/>
</dbReference>
<dbReference type="GO" id="GO:0003988">
    <property type="term" value="F:acetyl-CoA C-acyltransferase activity"/>
    <property type="evidence" value="ECO:0007669"/>
    <property type="project" value="UniProtKB-UniRule"/>
</dbReference>
<dbReference type="GO" id="GO:0006635">
    <property type="term" value="P:fatty acid beta-oxidation"/>
    <property type="evidence" value="ECO:0007669"/>
    <property type="project" value="UniProtKB-UniRule"/>
</dbReference>
<dbReference type="GO" id="GO:0010124">
    <property type="term" value="P:phenylacetate catabolic process"/>
    <property type="evidence" value="ECO:0007669"/>
    <property type="project" value="TreeGrafter"/>
</dbReference>
<dbReference type="CDD" id="cd00751">
    <property type="entry name" value="thiolase"/>
    <property type="match status" value="1"/>
</dbReference>
<dbReference type="FunFam" id="3.40.47.10:FF:000010">
    <property type="entry name" value="Acetyl-CoA acetyltransferase (Thiolase)"/>
    <property type="match status" value="1"/>
</dbReference>
<dbReference type="Gene3D" id="3.40.47.10">
    <property type="match status" value="2"/>
</dbReference>
<dbReference type="HAMAP" id="MF_01620">
    <property type="entry name" value="FadA"/>
    <property type="match status" value="1"/>
</dbReference>
<dbReference type="InterPro" id="IPR012805">
    <property type="entry name" value="FadA"/>
</dbReference>
<dbReference type="InterPro" id="IPR002155">
    <property type="entry name" value="Thiolase"/>
</dbReference>
<dbReference type="InterPro" id="IPR016039">
    <property type="entry name" value="Thiolase-like"/>
</dbReference>
<dbReference type="InterPro" id="IPR050215">
    <property type="entry name" value="Thiolase-like_sf_Thiolase"/>
</dbReference>
<dbReference type="InterPro" id="IPR020615">
    <property type="entry name" value="Thiolase_acyl_enz_int_AS"/>
</dbReference>
<dbReference type="InterPro" id="IPR020610">
    <property type="entry name" value="Thiolase_AS"/>
</dbReference>
<dbReference type="InterPro" id="IPR020617">
    <property type="entry name" value="Thiolase_C"/>
</dbReference>
<dbReference type="InterPro" id="IPR020613">
    <property type="entry name" value="Thiolase_CS"/>
</dbReference>
<dbReference type="InterPro" id="IPR020616">
    <property type="entry name" value="Thiolase_N"/>
</dbReference>
<dbReference type="NCBIfam" id="TIGR01930">
    <property type="entry name" value="AcCoA-C-Actrans"/>
    <property type="match status" value="1"/>
</dbReference>
<dbReference type="NCBIfam" id="TIGR02445">
    <property type="entry name" value="fadA"/>
    <property type="match status" value="1"/>
</dbReference>
<dbReference type="NCBIfam" id="NF006510">
    <property type="entry name" value="PRK08947.1"/>
    <property type="match status" value="1"/>
</dbReference>
<dbReference type="PANTHER" id="PTHR43853:SF11">
    <property type="entry name" value="3-KETOACYL-COA THIOLASE FADA"/>
    <property type="match status" value="1"/>
</dbReference>
<dbReference type="PANTHER" id="PTHR43853">
    <property type="entry name" value="3-KETOACYL-COA THIOLASE, PEROXISOMAL"/>
    <property type="match status" value="1"/>
</dbReference>
<dbReference type="Pfam" id="PF02803">
    <property type="entry name" value="Thiolase_C"/>
    <property type="match status" value="1"/>
</dbReference>
<dbReference type="Pfam" id="PF00108">
    <property type="entry name" value="Thiolase_N"/>
    <property type="match status" value="1"/>
</dbReference>
<dbReference type="PIRSF" id="PIRSF000429">
    <property type="entry name" value="Ac-CoA_Ac_transf"/>
    <property type="match status" value="1"/>
</dbReference>
<dbReference type="SUPFAM" id="SSF53901">
    <property type="entry name" value="Thiolase-like"/>
    <property type="match status" value="2"/>
</dbReference>
<dbReference type="PROSITE" id="PS00098">
    <property type="entry name" value="THIOLASE_1"/>
    <property type="match status" value="1"/>
</dbReference>
<dbReference type="PROSITE" id="PS00737">
    <property type="entry name" value="THIOLASE_2"/>
    <property type="match status" value="1"/>
</dbReference>
<dbReference type="PROSITE" id="PS00099">
    <property type="entry name" value="THIOLASE_3"/>
    <property type="match status" value="1"/>
</dbReference>
<organism>
    <name type="scientific">Yersinia pseudotuberculosis serotype I (strain IP32953)</name>
    <dbReference type="NCBI Taxonomy" id="273123"/>
    <lineage>
        <taxon>Bacteria</taxon>
        <taxon>Pseudomonadati</taxon>
        <taxon>Pseudomonadota</taxon>
        <taxon>Gammaproteobacteria</taxon>
        <taxon>Enterobacterales</taxon>
        <taxon>Yersiniaceae</taxon>
        <taxon>Yersinia</taxon>
    </lineage>
</organism>
<proteinExistence type="inferred from homology"/>
<reference key="1">
    <citation type="journal article" date="2004" name="Proc. Natl. Acad. Sci. U.S.A.">
        <title>Insights into the evolution of Yersinia pestis through whole-genome comparison with Yersinia pseudotuberculosis.</title>
        <authorList>
            <person name="Chain P.S.G."/>
            <person name="Carniel E."/>
            <person name="Larimer F.W."/>
            <person name="Lamerdin J."/>
            <person name="Stoutland P.O."/>
            <person name="Regala W.M."/>
            <person name="Georgescu A.M."/>
            <person name="Vergez L.M."/>
            <person name="Land M.L."/>
            <person name="Motin V.L."/>
            <person name="Brubaker R.R."/>
            <person name="Fowler J."/>
            <person name="Hinnebusch J."/>
            <person name="Marceau M."/>
            <person name="Medigue C."/>
            <person name="Simonet M."/>
            <person name="Chenal-Francisque V."/>
            <person name="Souza B."/>
            <person name="Dacheux D."/>
            <person name="Elliott J.M."/>
            <person name="Derbise A."/>
            <person name="Hauser L.J."/>
            <person name="Garcia E."/>
        </authorList>
    </citation>
    <scope>NUCLEOTIDE SEQUENCE [LARGE SCALE GENOMIC DNA]</scope>
    <source>
        <strain>IP32953</strain>
    </source>
</reference>
<accession>Q66FR9</accession>